<proteinExistence type="inferred from homology"/>
<comment type="function">
    <text evidence="2">As a component of the minor spliceosome, involved in the splicing of U12-type introns in pre-mRNAs.</text>
</comment>
<comment type="subunit">
    <text evidence="2">Component of the minor spliceosome, which splices U12-type introns.</text>
</comment>
<comment type="subcellular location">
    <subcellularLocation>
        <location evidence="1">Cytoplasm</location>
    </subcellularLocation>
</comment>
<comment type="similarity">
    <text evidence="3">Belongs to the CRIPT family.</text>
</comment>
<sequence>MVCDKCEKKLGTVITPDTWKSGARNTTESGGRKLNENKALTSKTARFNPYGKNKFAICRICKSSVHQPGSHYCQGCAYKKGICAMCGKKVLETKNYKQTSV</sequence>
<reference key="1">
    <citation type="submission" date="2004-04" db="EMBL/GenBank/DDBJ databases">
        <authorList>
            <consortium name="NIH - Xenopus Gene Collection (XGC) project"/>
        </authorList>
    </citation>
    <scope>NUCLEOTIDE SEQUENCE [LARGE SCALE MRNA]</scope>
    <source>
        <tissue>Embryo</tissue>
    </source>
</reference>
<keyword id="KW-0963">Cytoplasm</keyword>
<keyword id="KW-0507">mRNA processing</keyword>
<keyword id="KW-0508">mRNA splicing</keyword>
<keyword id="KW-1185">Reference proteome</keyword>
<keyword id="KW-0747">Spliceosome</keyword>
<dbReference type="EMBL" id="BC068774">
    <property type="protein sequence ID" value="AAH68774.1"/>
    <property type="molecule type" value="mRNA"/>
</dbReference>
<dbReference type="RefSeq" id="NP_001084737.1">
    <property type="nucleotide sequence ID" value="NM_001091268.1"/>
</dbReference>
<dbReference type="SMR" id="Q6NU28"/>
<dbReference type="DNASU" id="414704"/>
<dbReference type="GeneID" id="414704"/>
<dbReference type="KEGG" id="xla:414704"/>
<dbReference type="AGR" id="Xenbase:XB-GENE-6252131"/>
<dbReference type="CTD" id="414704"/>
<dbReference type="Xenbase" id="XB-GENE-6252131">
    <property type="gene designation" value="cript.S"/>
</dbReference>
<dbReference type="OMA" id="MPCDKCE"/>
<dbReference type="OrthoDB" id="147332at2759"/>
<dbReference type="Proteomes" id="UP000186698">
    <property type="component" value="Chromosome 5S"/>
</dbReference>
<dbReference type="Bgee" id="414704">
    <property type="expression patterns" value="Expressed in gastrula and 19 other cell types or tissues"/>
</dbReference>
<dbReference type="GO" id="GO:0005737">
    <property type="term" value="C:cytoplasm"/>
    <property type="evidence" value="ECO:0007669"/>
    <property type="project" value="UniProtKB-SubCell"/>
</dbReference>
<dbReference type="GO" id="GO:0030425">
    <property type="term" value="C:dendrite"/>
    <property type="evidence" value="ECO:0000318"/>
    <property type="project" value="GO_Central"/>
</dbReference>
<dbReference type="GO" id="GO:0005681">
    <property type="term" value="C:spliceosomal complex"/>
    <property type="evidence" value="ECO:0007669"/>
    <property type="project" value="UniProtKB-KW"/>
</dbReference>
<dbReference type="GO" id="GO:0008017">
    <property type="term" value="F:microtubule binding"/>
    <property type="evidence" value="ECO:0000318"/>
    <property type="project" value="GO_Central"/>
</dbReference>
<dbReference type="GO" id="GO:0030165">
    <property type="term" value="F:PDZ domain binding"/>
    <property type="evidence" value="ECO:0007669"/>
    <property type="project" value="TreeGrafter"/>
</dbReference>
<dbReference type="GO" id="GO:0031122">
    <property type="term" value="P:cytoplasmic microtubule organization"/>
    <property type="evidence" value="ECO:0000318"/>
    <property type="project" value="GO_Central"/>
</dbReference>
<dbReference type="GO" id="GO:0006397">
    <property type="term" value="P:mRNA processing"/>
    <property type="evidence" value="ECO:0007669"/>
    <property type="project" value="UniProtKB-KW"/>
</dbReference>
<dbReference type="GO" id="GO:0008380">
    <property type="term" value="P:RNA splicing"/>
    <property type="evidence" value="ECO:0007669"/>
    <property type="project" value="UniProtKB-KW"/>
</dbReference>
<dbReference type="InterPro" id="IPR019367">
    <property type="entry name" value="PDZ-binding_CRIPT"/>
</dbReference>
<dbReference type="PANTHER" id="PTHR11805">
    <property type="entry name" value="CYSTEINE-RICH PDZ-BINDING PROTEIN"/>
    <property type="match status" value="1"/>
</dbReference>
<dbReference type="PANTHER" id="PTHR11805:SF1">
    <property type="entry name" value="CYSTEINE-RICH PDZ-BINDING PROTEIN"/>
    <property type="match status" value="1"/>
</dbReference>
<dbReference type="Pfam" id="PF10235">
    <property type="entry name" value="Cript"/>
    <property type="match status" value="1"/>
</dbReference>
<feature type="chain" id="PRO_0000314569" description="Cysteine-rich PDZ-binding protein">
    <location>
        <begin position="1"/>
        <end position="101"/>
    </location>
</feature>
<evidence type="ECO:0000250" key="1"/>
<evidence type="ECO:0000250" key="2">
    <source>
        <dbReference type="UniProtKB" id="Q9P021"/>
    </source>
</evidence>
<evidence type="ECO:0000305" key="3"/>
<name>CRIPT_XENLA</name>
<gene>
    <name type="primary">cript</name>
</gene>
<protein>
    <recommendedName>
        <fullName>Cysteine-rich PDZ-binding protein</fullName>
    </recommendedName>
    <alternativeName>
        <fullName>Cysteine-rich interactor of PDZ three</fullName>
        <shortName>Cysteine-rich interactor of PDZ3</shortName>
    </alternativeName>
</protein>
<organism>
    <name type="scientific">Xenopus laevis</name>
    <name type="common">African clawed frog</name>
    <dbReference type="NCBI Taxonomy" id="8355"/>
    <lineage>
        <taxon>Eukaryota</taxon>
        <taxon>Metazoa</taxon>
        <taxon>Chordata</taxon>
        <taxon>Craniata</taxon>
        <taxon>Vertebrata</taxon>
        <taxon>Euteleostomi</taxon>
        <taxon>Amphibia</taxon>
        <taxon>Batrachia</taxon>
        <taxon>Anura</taxon>
        <taxon>Pipoidea</taxon>
        <taxon>Pipidae</taxon>
        <taxon>Xenopodinae</taxon>
        <taxon>Xenopus</taxon>
        <taxon>Xenopus</taxon>
    </lineage>
</organism>
<accession>Q6NU28</accession>